<dbReference type="EC" id="7.1.1.2"/>
<dbReference type="EMBL" id="X54253">
    <property type="protein sequence ID" value="CAA38174.1"/>
    <property type="molecule type" value="Genomic_DNA"/>
</dbReference>
<dbReference type="PIR" id="S26025">
    <property type="entry name" value="S26025"/>
</dbReference>
<dbReference type="RefSeq" id="NP_006952.2">
    <property type="nucleotide sequence ID" value="NC_001327.1"/>
</dbReference>
<dbReference type="SMR" id="P24884"/>
<dbReference type="GeneID" id="807668"/>
<dbReference type="CTD" id="4540"/>
<dbReference type="GO" id="GO:0005743">
    <property type="term" value="C:mitochondrial inner membrane"/>
    <property type="evidence" value="ECO:0007669"/>
    <property type="project" value="UniProtKB-SubCell"/>
</dbReference>
<dbReference type="GO" id="GO:0008137">
    <property type="term" value="F:NADH dehydrogenase (ubiquinone) activity"/>
    <property type="evidence" value="ECO:0007669"/>
    <property type="project" value="UniProtKB-EC"/>
</dbReference>
<dbReference type="GO" id="GO:0042773">
    <property type="term" value="P:ATP synthesis coupled electron transport"/>
    <property type="evidence" value="ECO:0007669"/>
    <property type="project" value="InterPro"/>
</dbReference>
<dbReference type="GO" id="GO:0015990">
    <property type="term" value="P:electron transport coupled proton transport"/>
    <property type="evidence" value="ECO:0007669"/>
    <property type="project" value="TreeGrafter"/>
</dbReference>
<dbReference type="InterPro" id="IPR001750">
    <property type="entry name" value="ND/Mrp_TM"/>
</dbReference>
<dbReference type="InterPro" id="IPR003945">
    <property type="entry name" value="NU5C-like"/>
</dbReference>
<dbReference type="PANTHER" id="PTHR42829">
    <property type="entry name" value="NADH-UBIQUINONE OXIDOREDUCTASE CHAIN 5"/>
    <property type="match status" value="1"/>
</dbReference>
<dbReference type="PANTHER" id="PTHR42829:SF2">
    <property type="entry name" value="NADH-UBIQUINONE OXIDOREDUCTASE CHAIN 5"/>
    <property type="match status" value="1"/>
</dbReference>
<dbReference type="Pfam" id="PF00361">
    <property type="entry name" value="Proton_antipo_M"/>
    <property type="match status" value="1"/>
</dbReference>
<dbReference type="PRINTS" id="PR01434">
    <property type="entry name" value="NADHDHGNASE5"/>
</dbReference>
<keyword id="KW-0249">Electron transport</keyword>
<keyword id="KW-0472">Membrane</keyword>
<keyword id="KW-0496">Mitochondrion</keyword>
<keyword id="KW-0999">Mitochondrion inner membrane</keyword>
<keyword id="KW-0520">NAD</keyword>
<keyword id="KW-0679">Respiratory chain</keyword>
<keyword id="KW-1278">Translocase</keyword>
<keyword id="KW-0812">Transmembrane</keyword>
<keyword id="KW-1133">Transmembrane helix</keyword>
<keyword id="KW-0813">Transport</keyword>
<keyword id="KW-0830">Ubiquinone</keyword>
<proteinExistence type="inferred from homology"/>
<geneLocation type="mitochondrion"/>
<gene>
    <name type="primary">ND5</name>
</gene>
<protein>
    <recommendedName>
        <fullName>NADH-ubiquinone oxidoreductase chain 5</fullName>
        <ecNumber>7.1.1.2</ecNumber>
    </recommendedName>
    <alternativeName>
        <fullName>NADH dehydrogenase subunit 5</fullName>
    </alternativeName>
</protein>
<comment type="function">
    <text evidence="1">Core subunit of the mitochondrial membrane respiratory chain NADH dehydrogenase (Complex I) that is believed to belong to the minimal assembly required for catalysis. Complex I functions in the transfer of electrons from NADH to the respiratory chain. The immediate electron acceptor for the enzyme is believed to be ubiquinone (By similarity).</text>
</comment>
<comment type="catalytic activity">
    <reaction>
        <text>a ubiquinone + NADH + 5 H(+)(in) = a ubiquinol + NAD(+) + 4 H(+)(out)</text>
        <dbReference type="Rhea" id="RHEA:29091"/>
        <dbReference type="Rhea" id="RHEA-COMP:9565"/>
        <dbReference type="Rhea" id="RHEA-COMP:9566"/>
        <dbReference type="ChEBI" id="CHEBI:15378"/>
        <dbReference type="ChEBI" id="CHEBI:16389"/>
        <dbReference type="ChEBI" id="CHEBI:17976"/>
        <dbReference type="ChEBI" id="CHEBI:57540"/>
        <dbReference type="ChEBI" id="CHEBI:57945"/>
        <dbReference type="EC" id="7.1.1.2"/>
    </reaction>
</comment>
<comment type="subcellular location">
    <subcellularLocation>
        <location evidence="1">Mitochondrion inner membrane</location>
        <topology evidence="1">Multi-pass membrane protein</topology>
    </subcellularLocation>
</comment>
<comment type="similarity">
    <text evidence="3">Belongs to the complex I subunit 5 family.</text>
</comment>
<organism>
    <name type="scientific">Ascaris suum</name>
    <name type="common">Pig roundworm</name>
    <name type="synonym">Ascaris lumbricoides</name>
    <dbReference type="NCBI Taxonomy" id="6253"/>
    <lineage>
        <taxon>Eukaryota</taxon>
        <taxon>Metazoa</taxon>
        <taxon>Ecdysozoa</taxon>
        <taxon>Nematoda</taxon>
        <taxon>Chromadorea</taxon>
        <taxon>Rhabditida</taxon>
        <taxon>Spirurina</taxon>
        <taxon>Ascaridomorpha</taxon>
        <taxon>Ascaridoidea</taxon>
        <taxon>Ascarididae</taxon>
        <taxon>Ascaris</taxon>
    </lineage>
</organism>
<feature type="chain" id="PRO_0000118063" description="NADH-ubiquinone oxidoreductase chain 5">
    <location>
        <begin position="1"/>
        <end position="547"/>
    </location>
</feature>
<feature type="transmembrane region" description="Helical" evidence="2">
    <location>
        <begin position="3"/>
        <end position="23"/>
    </location>
</feature>
<feature type="transmembrane region" description="Helical" evidence="2">
    <location>
        <begin position="45"/>
        <end position="65"/>
    </location>
</feature>
<feature type="transmembrane region" description="Helical" evidence="2">
    <location>
        <begin position="80"/>
        <end position="100"/>
    </location>
</feature>
<feature type="transmembrane region" description="Helical" evidence="2">
    <location>
        <begin position="101"/>
        <end position="121"/>
    </location>
</feature>
<feature type="transmembrane region" description="Helical" evidence="2">
    <location>
        <begin position="132"/>
        <end position="152"/>
    </location>
</feature>
<feature type="transmembrane region" description="Helical" evidence="2">
    <location>
        <begin position="198"/>
        <end position="218"/>
    </location>
</feature>
<feature type="transmembrane region" description="Helical" evidence="2">
    <location>
        <begin position="227"/>
        <end position="247"/>
    </location>
</feature>
<feature type="transmembrane region" description="Helical" evidence="2">
    <location>
        <begin position="264"/>
        <end position="284"/>
    </location>
</feature>
<feature type="transmembrane region" description="Helical" evidence="2">
    <location>
        <begin position="319"/>
        <end position="339"/>
    </location>
</feature>
<feature type="transmembrane region" description="Helical" evidence="2">
    <location>
        <begin position="352"/>
        <end position="372"/>
    </location>
</feature>
<feature type="transmembrane region" description="Helical" evidence="2">
    <location>
        <begin position="399"/>
        <end position="419"/>
    </location>
</feature>
<feature type="transmembrane region" description="Helical" evidence="2">
    <location>
        <begin position="430"/>
        <end position="450"/>
    </location>
</feature>
<feature type="transmembrane region" description="Helical" evidence="2">
    <location>
        <begin position="460"/>
        <end position="477"/>
    </location>
</feature>
<feature type="transmembrane region" description="Helical" evidence="2">
    <location>
        <begin position="485"/>
        <end position="505"/>
    </location>
</feature>
<feature type="transmembrane region" description="Helical" evidence="2">
    <location>
        <begin position="512"/>
        <end position="532"/>
    </location>
</feature>
<reference key="1">
    <citation type="journal article" date="1992" name="Genetics">
        <title>The mitochondrial genomes of two nematodes, Caenorhabditis elegans and Ascaris suum.</title>
        <authorList>
            <person name="Okimoto R."/>
            <person name="Macfarlane J.L."/>
            <person name="Clary D.O."/>
            <person name="Wolstenholme D.R."/>
        </authorList>
    </citation>
    <scope>NUCLEOTIDE SEQUENCE [GENOMIC DNA]</scope>
    <source>
        <tissue>Body wall muscle</tissue>
        <tissue>Egg</tissue>
    </source>
</reference>
<accession>P24884</accession>
<name>NU5M_ASCSU</name>
<evidence type="ECO:0000250" key="1"/>
<evidence type="ECO:0000255" key="2"/>
<evidence type="ECO:0000305" key="3"/>
<sequence>MDISIFLMVFLLFCVSLFLIFFVSCVKLSFFFVEWDFLSFKISVYFNSIMFSLILLLVTISVLVFSTYYLSGELNFNYYYFMLLVFVGSMFSLIFSSGCFSMLVSWDLLGISSFFLVLFYNNWDSCSGAMNTVLTNRLGDFFLFVFFSSTIFSSYYFLSLSFFCWLSSLMLLLASFTKSAQFPFSGWLPKAMSAPTPISSLVHSSTLVTAGLVLIMNFSEMILNKDVIMIIMVVGVFTMFFSSMAALVEEDLKKVVALSTLSQMGFSMLTVGIGLSFVSFIHLLSHALFKSCLFMQVGYLIHCSLGQQDGRNYSNLGNVPYFIQLQLLVTLFCLCGLVFSSGAVSKDYILEFFFSNFFMVVFACMFFFSVFLTFGYSYRLWKGFFMSFSRPVFCFSSSVVMNFLSLLLVLFSIFFIWWMNFNMLCMPCLFLYVDFFVPLFFVVMIMVVGFLCVKLLLKEFVYKFLVDFFAKGWVYGLKNYKFFDLFLGGINSLGVTFFSFTGFWSNSYMKSLYFNSVVIVLVLFFFLVWGCILSLKYALCKRMILAL</sequence>